<proteinExistence type="inferred from homology"/>
<sequence length="199" mass="22190">MITYTKPLSKLIGHFEKFPGIGPRTAQRLALFVLKQPESTIRDFSKALLEAHSNVGRCKKCFNFTSEDECEICKNTERNQKLICVVAETKDLLALERAREFKGVYHVIGGLISPMDSVGPELLEIRSLVERVSKSEIDEIILALTPSVEGDTTSLYIGKLLAPFTKVTRIAYGLPMGSELEYVDEVTLARALEGRTKLN</sequence>
<feature type="chain" id="PRO_1000001577" description="Recombination protein RecR">
    <location>
        <begin position="1"/>
        <end position="199"/>
    </location>
</feature>
<feature type="domain" description="Toprim" evidence="1">
    <location>
        <begin position="81"/>
        <end position="175"/>
    </location>
</feature>
<feature type="zinc finger region" description="C4-type" evidence="1">
    <location>
        <begin position="58"/>
        <end position="73"/>
    </location>
</feature>
<reference key="1">
    <citation type="journal article" date="2006" name="Science">
        <title>Genomic islands and the ecology and evolution of Prochlorococcus.</title>
        <authorList>
            <person name="Coleman M.L."/>
            <person name="Sullivan M.B."/>
            <person name="Martiny A.C."/>
            <person name="Steglich C."/>
            <person name="Barry K."/>
            <person name="Delong E.F."/>
            <person name="Chisholm S.W."/>
        </authorList>
    </citation>
    <scope>NUCLEOTIDE SEQUENCE [LARGE SCALE GENOMIC DNA]</scope>
    <source>
        <strain>MIT 9312</strain>
    </source>
</reference>
<organism>
    <name type="scientific">Prochlorococcus marinus (strain MIT 9312)</name>
    <dbReference type="NCBI Taxonomy" id="74546"/>
    <lineage>
        <taxon>Bacteria</taxon>
        <taxon>Bacillati</taxon>
        <taxon>Cyanobacteriota</taxon>
        <taxon>Cyanophyceae</taxon>
        <taxon>Synechococcales</taxon>
        <taxon>Prochlorococcaceae</taxon>
        <taxon>Prochlorococcus</taxon>
    </lineage>
</organism>
<protein>
    <recommendedName>
        <fullName evidence="1">Recombination protein RecR</fullName>
    </recommendedName>
</protein>
<name>RECR_PROM9</name>
<accession>Q31AC8</accession>
<comment type="function">
    <text evidence="1">May play a role in DNA repair. It seems to be involved in an RecBC-independent recombinational process of DNA repair. It may act with RecF and RecO.</text>
</comment>
<comment type="similarity">
    <text evidence="1">Belongs to the RecR family.</text>
</comment>
<keyword id="KW-0227">DNA damage</keyword>
<keyword id="KW-0233">DNA recombination</keyword>
<keyword id="KW-0234">DNA repair</keyword>
<keyword id="KW-0479">Metal-binding</keyword>
<keyword id="KW-0862">Zinc</keyword>
<keyword id="KW-0863">Zinc-finger</keyword>
<evidence type="ECO:0000255" key="1">
    <source>
        <dbReference type="HAMAP-Rule" id="MF_00017"/>
    </source>
</evidence>
<dbReference type="EMBL" id="CP000111">
    <property type="protein sequence ID" value="ABB50167.1"/>
    <property type="molecule type" value="Genomic_DNA"/>
</dbReference>
<dbReference type="RefSeq" id="WP_011376658.1">
    <property type="nucleotide sequence ID" value="NC_007577.1"/>
</dbReference>
<dbReference type="SMR" id="Q31AC8"/>
<dbReference type="STRING" id="74546.PMT9312_1108"/>
<dbReference type="KEGG" id="pmi:PMT9312_1108"/>
<dbReference type="eggNOG" id="COG0353">
    <property type="taxonomic scope" value="Bacteria"/>
</dbReference>
<dbReference type="HOGENOM" id="CLU_060739_1_0_3"/>
<dbReference type="OrthoDB" id="9802672at2"/>
<dbReference type="Proteomes" id="UP000002715">
    <property type="component" value="Chromosome"/>
</dbReference>
<dbReference type="GO" id="GO:0003677">
    <property type="term" value="F:DNA binding"/>
    <property type="evidence" value="ECO:0007669"/>
    <property type="project" value="UniProtKB-UniRule"/>
</dbReference>
<dbReference type="GO" id="GO:0008270">
    <property type="term" value="F:zinc ion binding"/>
    <property type="evidence" value="ECO:0007669"/>
    <property type="project" value="UniProtKB-KW"/>
</dbReference>
<dbReference type="GO" id="GO:0006310">
    <property type="term" value="P:DNA recombination"/>
    <property type="evidence" value="ECO:0007669"/>
    <property type="project" value="UniProtKB-UniRule"/>
</dbReference>
<dbReference type="GO" id="GO:0006281">
    <property type="term" value="P:DNA repair"/>
    <property type="evidence" value="ECO:0007669"/>
    <property type="project" value="UniProtKB-UniRule"/>
</dbReference>
<dbReference type="CDD" id="cd01025">
    <property type="entry name" value="TOPRIM_recR"/>
    <property type="match status" value="1"/>
</dbReference>
<dbReference type="Gene3D" id="3.40.1360.10">
    <property type="match status" value="1"/>
</dbReference>
<dbReference type="Gene3D" id="6.10.250.240">
    <property type="match status" value="1"/>
</dbReference>
<dbReference type="Gene3D" id="1.10.8.420">
    <property type="entry name" value="RecR Domain 1"/>
    <property type="match status" value="1"/>
</dbReference>
<dbReference type="HAMAP" id="MF_00017">
    <property type="entry name" value="RecR"/>
    <property type="match status" value="1"/>
</dbReference>
<dbReference type="InterPro" id="IPR000093">
    <property type="entry name" value="DNA_Rcmb_RecR"/>
</dbReference>
<dbReference type="InterPro" id="IPR023627">
    <property type="entry name" value="Rcmb_RecR"/>
</dbReference>
<dbReference type="InterPro" id="IPR015967">
    <property type="entry name" value="Rcmb_RecR_Znf"/>
</dbReference>
<dbReference type="InterPro" id="IPR006171">
    <property type="entry name" value="TOPRIM_dom"/>
</dbReference>
<dbReference type="InterPro" id="IPR034137">
    <property type="entry name" value="TOPRIM_RecR"/>
</dbReference>
<dbReference type="NCBIfam" id="TIGR00615">
    <property type="entry name" value="recR"/>
    <property type="match status" value="1"/>
</dbReference>
<dbReference type="PANTHER" id="PTHR30446">
    <property type="entry name" value="RECOMBINATION PROTEIN RECR"/>
    <property type="match status" value="1"/>
</dbReference>
<dbReference type="PANTHER" id="PTHR30446:SF0">
    <property type="entry name" value="RECOMBINATION PROTEIN RECR"/>
    <property type="match status" value="1"/>
</dbReference>
<dbReference type="Pfam" id="PF21175">
    <property type="entry name" value="RecR_C"/>
    <property type="match status" value="1"/>
</dbReference>
<dbReference type="Pfam" id="PF21176">
    <property type="entry name" value="RecR_HhH"/>
    <property type="match status" value="1"/>
</dbReference>
<dbReference type="Pfam" id="PF02132">
    <property type="entry name" value="RecR_ZnF"/>
    <property type="match status" value="1"/>
</dbReference>
<dbReference type="Pfam" id="PF13662">
    <property type="entry name" value="Toprim_4"/>
    <property type="match status" value="1"/>
</dbReference>
<dbReference type="SMART" id="SM00493">
    <property type="entry name" value="TOPRIM"/>
    <property type="match status" value="1"/>
</dbReference>
<dbReference type="SUPFAM" id="SSF111304">
    <property type="entry name" value="Recombination protein RecR"/>
    <property type="match status" value="1"/>
</dbReference>
<dbReference type="PROSITE" id="PS01300">
    <property type="entry name" value="RECR"/>
    <property type="match status" value="1"/>
</dbReference>
<dbReference type="PROSITE" id="PS50880">
    <property type="entry name" value="TOPRIM"/>
    <property type="match status" value="1"/>
</dbReference>
<gene>
    <name evidence="1" type="primary">recR</name>
    <name type="ordered locus">PMT9312_1108</name>
</gene>